<comment type="function">
    <text evidence="1">Binds 16S rRNA, required for the assembly of 30S particles and may also be responsible for determining the conformation of the 16S rRNA at the A site.</text>
</comment>
<comment type="cofactor">
    <cofactor evidence="1">
        <name>Zn(2+)</name>
        <dbReference type="ChEBI" id="CHEBI:29105"/>
    </cofactor>
    <text evidence="1">Binds 1 zinc ion per subunit.</text>
</comment>
<comment type="subunit">
    <text evidence="1">Part of the 30S ribosomal subunit. Contacts proteins S3 and S10.</text>
</comment>
<comment type="similarity">
    <text evidence="1">Belongs to the universal ribosomal protein uS14 family. Zinc-binding uS14 subfamily.</text>
</comment>
<organism>
    <name type="scientific">Streptococcus equi subsp. zooepidemicus (strain H70)</name>
    <dbReference type="NCBI Taxonomy" id="553483"/>
    <lineage>
        <taxon>Bacteria</taxon>
        <taxon>Bacillati</taxon>
        <taxon>Bacillota</taxon>
        <taxon>Bacilli</taxon>
        <taxon>Lactobacillales</taxon>
        <taxon>Streptococcaceae</taxon>
        <taxon>Streptococcus</taxon>
    </lineage>
</organism>
<keyword id="KW-0479">Metal-binding</keyword>
<keyword id="KW-0687">Ribonucleoprotein</keyword>
<keyword id="KW-0689">Ribosomal protein</keyword>
<keyword id="KW-0694">RNA-binding</keyword>
<keyword id="KW-0699">rRNA-binding</keyword>
<keyword id="KW-0862">Zinc</keyword>
<proteinExistence type="inferred from homology"/>
<evidence type="ECO:0000255" key="1">
    <source>
        <dbReference type="HAMAP-Rule" id="MF_01364"/>
    </source>
</evidence>
<evidence type="ECO:0000305" key="2"/>
<gene>
    <name evidence="1" type="primary">rpsZ</name>
    <name evidence="1" type="synonym">rpsN</name>
    <name type="ordered locus">SZO_00630</name>
</gene>
<name>RS14Z_STRS7</name>
<protein>
    <recommendedName>
        <fullName evidence="1">Small ribosomal subunit protein uS14</fullName>
    </recommendedName>
    <alternativeName>
        <fullName evidence="2">30S ribosomal protein S14 type Z</fullName>
    </alternativeName>
</protein>
<reference key="1">
    <citation type="journal article" date="2009" name="PLoS Pathog.">
        <title>Genomic evidence for the evolution of Streptococcus equi: host restriction, increased virulence, and genetic exchange with human pathogens.</title>
        <authorList>
            <person name="Holden M.T.G."/>
            <person name="Heather Z."/>
            <person name="Paillot R."/>
            <person name="Steward K.F."/>
            <person name="Webb K."/>
            <person name="Ainslie F."/>
            <person name="Jourdan T."/>
            <person name="Bason N.C."/>
            <person name="Holroyd N.E."/>
            <person name="Mungall K."/>
            <person name="Quail M.A."/>
            <person name="Sanders M."/>
            <person name="Simmonds M."/>
            <person name="Willey D."/>
            <person name="Brooks K."/>
            <person name="Aanensen D.M."/>
            <person name="Spratt B.G."/>
            <person name="Jolley K.A."/>
            <person name="Maiden M.C.J."/>
            <person name="Kehoe M."/>
            <person name="Chanter N."/>
            <person name="Bentley S.D."/>
            <person name="Robinson C."/>
            <person name="Maskell D.J."/>
            <person name="Parkhill J."/>
            <person name="Waller A.S."/>
        </authorList>
    </citation>
    <scope>NUCLEOTIDE SEQUENCE [LARGE SCALE GENOMIC DNA]</scope>
    <source>
        <strain>H70</strain>
    </source>
</reference>
<accession>C0MCC3</accession>
<dbReference type="EMBL" id="FM204884">
    <property type="protein sequence ID" value="CAW97666.1"/>
    <property type="molecule type" value="Genomic_DNA"/>
</dbReference>
<dbReference type="SMR" id="C0MCC3"/>
<dbReference type="KEGG" id="seq:SZO_00630"/>
<dbReference type="eggNOG" id="COG0199">
    <property type="taxonomic scope" value="Bacteria"/>
</dbReference>
<dbReference type="HOGENOM" id="CLU_139869_3_0_9"/>
<dbReference type="Proteomes" id="UP000001368">
    <property type="component" value="Chromosome"/>
</dbReference>
<dbReference type="GO" id="GO:0015935">
    <property type="term" value="C:small ribosomal subunit"/>
    <property type="evidence" value="ECO:0007669"/>
    <property type="project" value="TreeGrafter"/>
</dbReference>
<dbReference type="GO" id="GO:0019843">
    <property type="term" value="F:rRNA binding"/>
    <property type="evidence" value="ECO:0007669"/>
    <property type="project" value="UniProtKB-UniRule"/>
</dbReference>
<dbReference type="GO" id="GO:0003735">
    <property type="term" value="F:structural constituent of ribosome"/>
    <property type="evidence" value="ECO:0007669"/>
    <property type="project" value="InterPro"/>
</dbReference>
<dbReference type="GO" id="GO:0008270">
    <property type="term" value="F:zinc ion binding"/>
    <property type="evidence" value="ECO:0007669"/>
    <property type="project" value="UniProtKB-UniRule"/>
</dbReference>
<dbReference type="GO" id="GO:0006412">
    <property type="term" value="P:translation"/>
    <property type="evidence" value="ECO:0007669"/>
    <property type="project" value="UniProtKB-UniRule"/>
</dbReference>
<dbReference type="FunFam" id="4.10.830.10:FF:000001">
    <property type="entry name" value="30S ribosomal protein S14 type Z"/>
    <property type="match status" value="1"/>
</dbReference>
<dbReference type="Gene3D" id="4.10.830.10">
    <property type="entry name" value="30s Ribosomal Protein S14, Chain N"/>
    <property type="match status" value="1"/>
</dbReference>
<dbReference type="HAMAP" id="MF_01364_B">
    <property type="entry name" value="Ribosomal_uS14_2_B"/>
    <property type="match status" value="1"/>
</dbReference>
<dbReference type="InterPro" id="IPR001209">
    <property type="entry name" value="Ribosomal_uS14"/>
</dbReference>
<dbReference type="InterPro" id="IPR023053">
    <property type="entry name" value="Ribosomal_uS14_bact"/>
</dbReference>
<dbReference type="InterPro" id="IPR018271">
    <property type="entry name" value="Ribosomal_uS14_CS"/>
</dbReference>
<dbReference type="InterPro" id="IPR043140">
    <property type="entry name" value="Ribosomal_uS14_sf"/>
</dbReference>
<dbReference type="NCBIfam" id="NF005974">
    <property type="entry name" value="PRK08061.1"/>
    <property type="match status" value="1"/>
</dbReference>
<dbReference type="PANTHER" id="PTHR19836">
    <property type="entry name" value="30S RIBOSOMAL PROTEIN S14"/>
    <property type="match status" value="1"/>
</dbReference>
<dbReference type="PANTHER" id="PTHR19836:SF26">
    <property type="entry name" value="SMALL RIBOSOMAL SUBUNIT PROTEIN US14B"/>
    <property type="match status" value="1"/>
</dbReference>
<dbReference type="Pfam" id="PF00253">
    <property type="entry name" value="Ribosomal_S14"/>
    <property type="match status" value="1"/>
</dbReference>
<dbReference type="SUPFAM" id="SSF57716">
    <property type="entry name" value="Glucocorticoid receptor-like (DNA-binding domain)"/>
    <property type="match status" value="1"/>
</dbReference>
<dbReference type="PROSITE" id="PS00527">
    <property type="entry name" value="RIBOSOMAL_S14"/>
    <property type="match status" value="1"/>
</dbReference>
<feature type="chain" id="PRO_1000214917" description="Small ribosomal subunit protein uS14">
    <location>
        <begin position="1"/>
        <end position="61"/>
    </location>
</feature>
<feature type="binding site" evidence="1">
    <location>
        <position position="24"/>
    </location>
    <ligand>
        <name>Zn(2+)</name>
        <dbReference type="ChEBI" id="CHEBI:29105"/>
    </ligand>
</feature>
<feature type="binding site" evidence="1">
    <location>
        <position position="27"/>
    </location>
    <ligand>
        <name>Zn(2+)</name>
        <dbReference type="ChEBI" id="CHEBI:29105"/>
    </ligand>
</feature>
<feature type="binding site" evidence="1">
    <location>
        <position position="40"/>
    </location>
    <ligand>
        <name>Zn(2+)</name>
        <dbReference type="ChEBI" id="CHEBI:29105"/>
    </ligand>
</feature>
<feature type="binding site" evidence="1">
    <location>
        <position position="43"/>
    </location>
    <ligand>
        <name>Zn(2+)</name>
        <dbReference type="ChEBI" id="CHEBI:29105"/>
    </ligand>
</feature>
<sequence length="61" mass="7099">MAKKSMIAKNKRPAKYSTQAYTRCEKCGRPHSVYRKFKLCRVCFRELAYKGQIPGVVKASW</sequence>